<reference key="1">
    <citation type="journal article" date="1997" name="DNA Res.">
        <title>Structural analysis of Arabidopsis thaliana chromosome 5. II. Sequence features of the regions of 1,044,062 bp covered by thirteen physically assigned P1 clones.</title>
        <authorList>
            <person name="Kotani H."/>
            <person name="Nakamura Y."/>
            <person name="Sato S."/>
            <person name="Kaneko T."/>
            <person name="Asamizu E."/>
            <person name="Miyajima N."/>
            <person name="Tabata S."/>
        </authorList>
    </citation>
    <scope>NUCLEOTIDE SEQUENCE [LARGE SCALE GENOMIC DNA]</scope>
    <source>
        <strain>cv. Columbia</strain>
    </source>
</reference>
<reference key="2">
    <citation type="journal article" date="2017" name="Plant J.">
        <title>Araport11: a complete reannotation of the Arabidopsis thaliana reference genome.</title>
        <authorList>
            <person name="Cheng C.Y."/>
            <person name="Krishnakumar V."/>
            <person name="Chan A.P."/>
            <person name="Thibaud-Nissen F."/>
            <person name="Schobel S."/>
            <person name="Town C.D."/>
        </authorList>
    </citation>
    <scope>GENOME REANNOTATION</scope>
    <source>
        <strain>cv. Columbia</strain>
    </source>
</reference>
<reference key="3">
    <citation type="journal article" date="2003" name="Science">
        <title>Empirical analysis of transcriptional activity in the Arabidopsis genome.</title>
        <authorList>
            <person name="Yamada K."/>
            <person name="Lim J."/>
            <person name="Dale J.M."/>
            <person name="Chen H."/>
            <person name="Shinn P."/>
            <person name="Palm C.J."/>
            <person name="Southwick A.M."/>
            <person name="Wu H.C."/>
            <person name="Kim C.J."/>
            <person name="Nguyen M."/>
            <person name="Pham P.K."/>
            <person name="Cheuk R.F."/>
            <person name="Karlin-Newmann G."/>
            <person name="Liu S.X."/>
            <person name="Lam B."/>
            <person name="Sakano H."/>
            <person name="Wu T."/>
            <person name="Yu G."/>
            <person name="Miranda M."/>
            <person name="Quach H.L."/>
            <person name="Tripp M."/>
            <person name="Chang C.H."/>
            <person name="Lee J.M."/>
            <person name="Toriumi M.J."/>
            <person name="Chan M.M."/>
            <person name="Tang C.C."/>
            <person name="Onodera C.S."/>
            <person name="Deng J.M."/>
            <person name="Akiyama K."/>
            <person name="Ansari Y."/>
            <person name="Arakawa T."/>
            <person name="Banh J."/>
            <person name="Banno F."/>
            <person name="Bowser L."/>
            <person name="Brooks S.Y."/>
            <person name="Carninci P."/>
            <person name="Chao Q."/>
            <person name="Choy N."/>
            <person name="Enju A."/>
            <person name="Goldsmith A.D."/>
            <person name="Gurjal M."/>
            <person name="Hansen N.F."/>
            <person name="Hayashizaki Y."/>
            <person name="Johnson-Hopson C."/>
            <person name="Hsuan V.W."/>
            <person name="Iida K."/>
            <person name="Karnes M."/>
            <person name="Khan S."/>
            <person name="Koesema E."/>
            <person name="Ishida J."/>
            <person name="Jiang P.X."/>
            <person name="Jones T."/>
            <person name="Kawai J."/>
            <person name="Kamiya A."/>
            <person name="Meyers C."/>
            <person name="Nakajima M."/>
            <person name="Narusaka M."/>
            <person name="Seki M."/>
            <person name="Sakurai T."/>
            <person name="Satou M."/>
            <person name="Tamse R."/>
            <person name="Vaysberg M."/>
            <person name="Wallender E.K."/>
            <person name="Wong C."/>
            <person name="Yamamura Y."/>
            <person name="Yuan S."/>
            <person name="Shinozaki K."/>
            <person name="Davis R.W."/>
            <person name="Theologis A."/>
            <person name="Ecker J.R."/>
        </authorList>
    </citation>
    <scope>NUCLEOTIDE SEQUENCE [LARGE SCALE MRNA]</scope>
    <source>
        <strain>cv. Columbia</strain>
    </source>
</reference>
<reference key="4">
    <citation type="journal article" date="2000" name="Plant Mol. Biol.">
        <title>In Arabidopsis thaliana, 1% of the genome codes for a novel protein family unique to plants.</title>
        <authorList>
            <person name="Aubourg S."/>
            <person name="Boudet N."/>
            <person name="Kreis M."/>
            <person name="Lecharny A."/>
        </authorList>
    </citation>
    <scope>GENE FAMILY</scope>
</reference>
<reference key="5">
    <citation type="journal article" date="2004" name="Plant Cell">
        <title>Genome-wide analysis of Arabidopsis pentatricopeptide repeat proteins reveals their essential role in organelle biogenesis.</title>
        <authorList>
            <person name="Lurin C."/>
            <person name="Andres C."/>
            <person name="Aubourg S."/>
            <person name="Bellaoui M."/>
            <person name="Bitton F."/>
            <person name="Bruyere C."/>
            <person name="Caboche M."/>
            <person name="Debast C."/>
            <person name="Gualberto J."/>
            <person name="Hoffmann B."/>
            <person name="Lecharny A."/>
            <person name="Le Ret M."/>
            <person name="Martin-Magniette M.-L."/>
            <person name="Mireau H."/>
            <person name="Peeters N."/>
            <person name="Renou J.-P."/>
            <person name="Szurek B."/>
            <person name="Taconnat L."/>
            <person name="Small I."/>
        </authorList>
    </citation>
    <scope>GENE FAMILY</scope>
</reference>
<protein>
    <recommendedName>
        <fullName>Pentatricopeptide repeat-containing protein At5g40410, mitochondrial</fullName>
    </recommendedName>
</protein>
<gene>
    <name type="primary">PCMP-H15</name>
    <name type="ordered locus">At5g40410</name>
    <name type="ORF">MPO12.120</name>
    <name type="ORF">MPO12.16</name>
</gene>
<evidence type="ECO:0000255" key="1"/>
<evidence type="ECO:0000305" key="2"/>
<sequence>MIKANVYSCSKFRFLYRRRFLSQSSFVHSLDANVSSLIAAVKSCVSIELCRLLHCKVVKSVSYRHGFIGDQLVGCYLRLGHDVCAEKLFDEMPERDLVSWNSLISGYSGRGYLGKCFEVLSRMMISEVGFRPNEVTFLSMISACVYGGSKEEGRCIHGLVMKFGVLEEVKVVNAFINWYGKTGDLTSSCKLFEDLSIKNLVSWNTMIVIHLQNGLAEKGLAYFNMSRRVGHEPDQATFLAVLRSCEDMGVVRLAQGIHGLIMFGGFSGNKCITTALLDLYSKLGRLEDSSTVFHEITSPDSMAWTAMLAAYATHGFGRDAIKHFELMVHYGISPDHVTFTHLLNACSHSGLVEEGKHYFETMSKRYRIDPRLDHYSCMVDLLGRSGLLQDAYGLIKEMPMEPSSGVWGALLGACRVYKDTQLGTKAAERLFELEPRDGRNYVMLSNIYSASGLWKDASRIRNLMKQKGLVRASGCSYIEHGNKIHKFVVGDWSHPESEKIQKKLKEIRKKMKSEMGYKSKTEFVLHDVGEDVKEEMINQHSEKIAMAFGLLVVSPMEPIIIRKNLRICGDCHETAKAISLIEKRRIIIRDSKRFHHFLDGSCSCSDYW</sequence>
<organism>
    <name type="scientific">Arabidopsis thaliana</name>
    <name type="common">Mouse-ear cress</name>
    <dbReference type="NCBI Taxonomy" id="3702"/>
    <lineage>
        <taxon>Eukaryota</taxon>
        <taxon>Viridiplantae</taxon>
        <taxon>Streptophyta</taxon>
        <taxon>Embryophyta</taxon>
        <taxon>Tracheophyta</taxon>
        <taxon>Spermatophyta</taxon>
        <taxon>Magnoliopsida</taxon>
        <taxon>eudicotyledons</taxon>
        <taxon>Gunneridae</taxon>
        <taxon>Pentapetalae</taxon>
        <taxon>rosids</taxon>
        <taxon>malvids</taxon>
        <taxon>Brassicales</taxon>
        <taxon>Brassicaceae</taxon>
        <taxon>Camelineae</taxon>
        <taxon>Arabidopsis</taxon>
    </lineage>
</organism>
<dbReference type="EMBL" id="AB006702">
    <property type="protein sequence ID" value="BAB11598.1"/>
    <property type="molecule type" value="Genomic_DNA"/>
</dbReference>
<dbReference type="EMBL" id="CP002688">
    <property type="protein sequence ID" value="AED94545.1"/>
    <property type="molecule type" value="Genomic_DNA"/>
</dbReference>
<dbReference type="EMBL" id="AY062639">
    <property type="protein sequence ID" value="AAL32717.1"/>
    <property type="molecule type" value="mRNA"/>
</dbReference>
<dbReference type="EMBL" id="BT008372">
    <property type="protein sequence ID" value="AAP37731.1"/>
    <property type="molecule type" value="mRNA"/>
</dbReference>
<dbReference type="RefSeq" id="NP_198857.2">
    <property type="nucleotide sequence ID" value="NM_123405.4"/>
</dbReference>
<dbReference type="SMR" id="Q9FND6"/>
<dbReference type="FunCoup" id="Q9FND6">
    <property type="interactions" value="10"/>
</dbReference>
<dbReference type="MetOSite" id="Q9FND6"/>
<dbReference type="PaxDb" id="3702-AT5G40410.1"/>
<dbReference type="ProteomicsDB" id="249292"/>
<dbReference type="EnsemblPlants" id="AT5G40410.1">
    <property type="protein sequence ID" value="AT5G40410.1"/>
    <property type="gene ID" value="AT5G40410"/>
</dbReference>
<dbReference type="GeneID" id="834039"/>
<dbReference type="Gramene" id="AT5G40410.1">
    <property type="protein sequence ID" value="AT5G40410.1"/>
    <property type="gene ID" value="AT5G40410"/>
</dbReference>
<dbReference type="KEGG" id="ath:AT5G40410"/>
<dbReference type="Araport" id="AT5G40410"/>
<dbReference type="TAIR" id="AT5G40410"/>
<dbReference type="eggNOG" id="KOG4197">
    <property type="taxonomic scope" value="Eukaryota"/>
</dbReference>
<dbReference type="HOGENOM" id="CLU_002706_37_8_1"/>
<dbReference type="InParanoid" id="Q9FND6"/>
<dbReference type="OMA" id="YRHGFIG"/>
<dbReference type="OrthoDB" id="185373at2759"/>
<dbReference type="PhylomeDB" id="Q9FND6"/>
<dbReference type="PRO" id="PR:Q9FND6"/>
<dbReference type="Proteomes" id="UP000006548">
    <property type="component" value="Chromosome 5"/>
</dbReference>
<dbReference type="ExpressionAtlas" id="Q9FND6">
    <property type="expression patterns" value="baseline and differential"/>
</dbReference>
<dbReference type="GO" id="GO:0005739">
    <property type="term" value="C:mitochondrion"/>
    <property type="evidence" value="ECO:0007669"/>
    <property type="project" value="UniProtKB-SubCell"/>
</dbReference>
<dbReference type="GO" id="GO:0003723">
    <property type="term" value="F:RNA binding"/>
    <property type="evidence" value="ECO:0007669"/>
    <property type="project" value="InterPro"/>
</dbReference>
<dbReference type="GO" id="GO:0008270">
    <property type="term" value="F:zinc ion binding"/>
    <property type="evidence" value="ECO:0007669"/>
    <property type="project" value="InterPro"/>
</dbReference>
<dbReference type="GO" id="GO:0009451">
    <property type="term" value="P:RNA modification"/>
    <property type="evidence" value="ECO:0007669"/>
    <property type="project" value="InterPro"/>
</dbReference>
<dbReference type="FunFam" id="1.25.40.10:FF:000475">
    <property type="entry name" value="Pentatricopeptide repeat-containing protein At5g40410, mitochondrial"/>
    <property type="match status" value="1"/>
</dbReference>
<dbReference type="FunFam" id="1.25.40.10:FF:002284">
    <property type="entry name" value="Pentatricopeptide repeat-containing protein At5g40410, mitochondrial"/>
    <property type="match status" value="1"/>
</dbReference>
<dbReference type="FunFam" id="1.25.40.10:FF:000407">
    <property type="entry name" value="Putative pentatricopeptide repeat-containing protein"/>
    <property type="match status" value="1"/>
</dbReference>
<dbReference type="Gene3D" id="1.25.40.10">
    <property type="entry name" value="Tetratricopeptide repeat domain"/>
    <property type="match status" value="3"/>
</dbReference>
<dbReference type="InterPro" id="IPR032867">
    <property type="entry name" value="DYW_dom"/>
</dbReference>
<dbReference type="InterPro" id="IPR046848">
    <property type="entry name" value="E_motif"/>
</dbReference>
<dbReference type="InterPro" id="IPR046849">
    <property type="entry name" value="Eplus_motif"/>
</dbReference>
<dbReference type="InterPro" id="IPR002885">
    <property type="entry name" value="Pentatricopeptide_rpt"/>
</dbReference>
<dbReference type="InterPro" id="IPR046960">
    <property type="entry name" value="PPR_At4g14850-like_plant"/>
</dbReference>
<dbReference type="InterPro" id="IPR011990">
    <property type="entry name" value="TPR-like_helical_dom_sf"/>
</dbReference>
<dbReference type="NCBIfam" id="TIGR00756">
    <property type="entry name" value="PPR"/>
    <property type="match status" value="3"/>
</dbReference>
<dbReference type="PANTHER" id="PTHR47926">
    <property type="entry name" value="PENTATRICOPEPTIDE REPEAT-CONTAINING PROTEIN"/>
    <property type="match status" value="1"/>
</dbReference>
<dbReference type="Pfam" id="PF14432">
    <property type="entry name" value="DYW_deaminase"/>
    <property type="match status" value="1"/>
</dbReference>
<dbReference type="Pfam" id="PF20431">
    <property type="entry name" value="E_motif"/>
    <property type="match status" value="1"/>
</dbReference>
<dbReference type="Pfam" id="PF20430">
    <property type="entry name" value="Eplus_motif"/>
    <property type="match status" value="1"/>
</dbReference>
<dbReference type="Pfam" id="PF01535">
    <property type="entry name" value="PPR"/>
    <property type="match status" value="4"/>
</dbReference>
<dbReference type="Pfam" id="PF13041">
    <property type="entry name" value="PPR_2"/>
    <property type="match status" value="2"/>
</dbReference>
<dbReference type="PROSITE" id="PS51375">
    <property type="entry name" value="PPR"/>
    <property type="match status" value="11"/>
</dbReference>
<feature type="transit peptide" description="Mitochondrion" evidence="1">
    <location>
        <begin position="1"/>
        <end position="28"/>
    </location>
</feature>
<feature type="chain" id="PRO_0000363548" description="Pentatricopeptide repeat-containing protein At5g40410, mitochondrial">
    <location>
        <begin position="29"/>
        <end position="608"/>
    </location>
</feature>
<feature type="repeat" description="PPR 1">
    <location>
        <begin position="30"/>
        <end position="64"/>
    </location>
</feature>
<feature type="repeat" description="PPR 2">
    <location>
        <begin position="65"/>
        <end position="95"/>
    </location>
</feature>
<feature type="repeat" description="PPR 3">
    <location>
        <begin position="96"/>
        <end position="130"/>
    </location>
</feature>
<feature type="repeat" description="PPR 4">
    <location>
        <begin position="133"/>
        <end position="167"/>
    </location>
</feature>
<feature type="repeat" description="PPR 5">
    <location>
        <begin position="168"/>
        <end position="198"/>
    </location>
</feature>
<feature type="repeat" description="PPR 6">
    <location>
        <begin position="199"/>
        <end position="233"/>
    </location>
</feature>
<feature type="repeat" description="PPR 7">
    <location>
        <begin position="234"/>
        <end position="268"/>
    </location>
</feature>
<feature type="repeat" description="PPR 8">
    <location>
        <begin position="269"/>
        <end position="299"/>
    </location>
</feature>
<feature type="repeat" description="PPR 9">
    <location>
        <begin position="300"/>
        <end position="334"/>
    </location>
</feature>
<feature type="repeat" description="PPR 10">
    <location>
        <begin position="335"/>
        <end position="365"/>
    </location>
</feature>
<feature type="repeat" description="PPR 11">
    <location>
        <begin position="371"/>
        <end position="401"/>
    </location>
</feature>
<feature type="region of interest" description="Type E motif">
    <location>
        <begin position="406"/>
        <end position="481"/>
    </location>
</feature>
<feature type="region of interest" description="Type E(+) motif">
    <location>
        <begin position="482"/>
        <end position="512"/>
    </location>
</feature>
<feature type="region of interest" description="Type DYW motif">
    <location>
        <begin position="514"/>
        <end position="608"/>
    </location>
</feature>
<name>PP411_ARATH</name>
<comment type="subcellular location">
    <subcellularLocation>
        <location evidence="2">Mitochondrion</location>
    </subcellularLocation>
</comment>
<comment type="similarity">
    <text evidence="2">Belongs to the PPR family. PCMP-H subfamily.</text>
</comment>
<comment type="online information" name="Pentatricopeptide repeat proteins">
    <link uri="https://ppr.plantenergy.uwa.edu.au"/>
</comment>
<accession>Q9FND6</accession>
<proteinExistence type="evidence at transcript level"/>
<keyword id="KW-0496">Mitochondrion</keyword>
<keyword id="KW-1185">Reference proteome</keyword>
<keyword id="KW-0677">Repeat</keyword>
<keyword id="KW-0809">Transit peptide</keyword>